<comment type="function">
    <text evidence="2">One of the essential components for the initiation of protein synthesis. Protects formylmethionyl-tRNA from spontaneous hydrolysis and promotes its binding to the 30S ribosomal subunits. Also involved in the hydrolysis of GTP during the formation of the 70S ribosomal complex.</text>
</comment>
<comment type="subcellular location">
    <subcellularLocation>
        <location evidence="2">Cytoplasm</location>
    </subcellularLocation>
</comment>
<comment type="similarity">
    <text evidence="2">Belongs to the TRAFAC class translation factor GTPase superfamily. Classic translation factor GTPase family. IF-2 subfamily.</text>
</comment>
<name>IF2_SHEB8</name>
<protein>
    <recommendedName>
        <fullName evidence="2">Translation initiation factor IF-2</fullName>
    </recommendedName>
</protein>
<gene>
    <name evidence="2" type="primary">infB</name>
    <name type="ordered locus">Shew185_3280</name>
</gene>
<keyword id="KW-0963">Cytoplasm</keyword>
<keyword id="KW-0342">GTP-binding</keyword>
<keyword id="KW-0396">Initiation factor</keyword>
<keyword id="KW-0547">Nucleotide-binding</keyword>
<keyword id="KW-0648">Protein biosynthesis</keyword>
<evidence type="ECO:0000250" key="1"/>
<evidence type="ECO:0000255" key="2">
    <source>
        <dbReference type="HAMAP-Rule" id="MF_00100"/>
    </source>
</evidence>
<evidence type="ECO:0000256" key="3">
    <source>
        <dbReference type="SAM" id="MobiDB-lite"/>
    </source>
</evidence>
<feature type="chain" id="PRO_1000008329" description="Translation initiation factor IF-2">
    <location>
        <begin position="1"/>
        <end position="880"/>
    </location>
</feature>
<feature type="domain" description="tr-type G">
    <location>
        <begin position="380"/>
        <end position="549"/>
    </location>
</feature>
<feature type="region of interest" description="Disordered" evidence="3">
    <location>
        <begin position="180"/>
        <end position="289"/>
    </location>
</feature>
<feature type="region of interest" description="G1" evidence="1">
    <location>
        <begin position="389"/>
        <end position="396"/>
    </location>
</feature>
<feature type="region of interest" description="G2" evidence="1">
    <location>
        <begin position="414"/>
        <end position="418"/>
    </location>
</feature>
<feature type="region of interest" description="G3" evidence="1">
    <location>
        <begin position="435"/>
        <end position="438"/>
    </location>
</feature>
<feature type="region of interest" description="G4" evidence="1">
    <location>
        <begin position="489"/>
        <end position="492"/>
    </location>
</feature>
<feature type="region of interest" description="G5" evidence="1">
    <location>
        <begin position="525"/>
        <end position="527"/>
    </location>
</feature>
<feature type="compositionally biased region" description="Basic and acidic residues" evidence="3">
    <location>
        <begin position="180"/>
        <end position="194"/>
    </location>
</feature>
<feature type="compositionally biased region" description="Basic and acidic residues" evidence="3">
    <location>
        <begin position="202"/>
        <end position="228"/>
    </location>
</feature>
<feature type="compositionally biased region" description="Basic residues" evidence="3">
    <location>
        <begin position="249"/>
        <end position="262"/>
    </location>
</feature>
<feature type="binding site" evidence="2">
    <location>
        <begin position="389"/>
        <end position="396"/>
    </location>
    <ligand>
        <name>GTP</name>
        <dbReference type="ChEBI" id="CHEBI:37565"/>
    </ligand>
</feature>
<feature type="binding site" evidence="2">
    <location>
        <begin position="435"/>
        <end position="439"/>
    </location>
    <ligand>
        <name>GTP</name>
        <dbReference type="ChEBI" id="CHEBI:37565"/>
    </ligand>
</feature>
<feature type="binding site" evidence="2">
    <location>
        <begin position="489"/>
        <end position="492"/>
    </location>
    <ligand>
        <name>GTP</name>
        <dbReference type="ChEBI" id="CHEBI:37565"/>
    </ligand>
</feature>
<proteinExistence type="inferred from homology"/>
<sequence length="880" mass="95543">MADTTVEKLATEVGKSVERLIEQFSQAGIKKGQADNVTEAEKQQLLDYLKKQHGGENAPTKMTLQRKTVSTLSVAGNGGQSKDVKVEVRKTRTFVKRDANEATLKAEEEAKVEAEALAKAKAEAEAAAAVKAKAEADAKAKADAEAKAKAKAAAEVKVVKDMSPEAEAARLEAERLKAAQEAATKRKQDEEAAKAAETARLLAEEHSKRWAEEERQRLEAEKNGDHHITTSKVARAAEDTSDLDEEKRGRRARNKSNAKKRGGKDARDGREKHMRNRSTAPESMAHGFNKPVAAVSRDVRIGETVTVSELAHLMAVKATEIIKQMMKMGSMVTINQVLDQETAQMVAEEMGHKVVLIRENELEHQVLKDRDDEDGIKQESRAPVVTIMGHVDHGKTSLLDYIRRAKVAAGEAGGITQHIGAYHVETENGMITFLDTPGHAAFTAMRARGAKATDIVVLVVAADDGVMPQTIEAIQHAKAGNVPLIVAVNKMDKPEADIDRVKSELSQHGVMSEDWGGDNMFAFVSAKTGEGVDELLEGILLQAEVLELKAVRDGMAAGVVIESQLDKGRGPVATILVQEGTLRQGDIVLCGLEYGKIRAMKDENGRSITEAGPSIPVEILGLSGVPSAGDEATVVRDERKAREVALYRQGKFRDVKLARQQKSKLENMFANMTEGEVKELNIVLKADVQGSLEAITDSLTGLSTDEVKVNIIARGVGALTETDATLAAASNAILVGFNVRADAQARKTIDSESVDLRYYSVIYNLIDEVRAAMTGMLSPEFKQQIIGLAEVRDVFKSPKLGAIAGCMVTEGTIKRSAPIRVLRDNVVIYEGELESLRRFKDDVAEVRNGMECGIGVKNYNDVRVGDQIEVFETVEIARTL</sequence>
<accession>A6WRG8</accession>
<reference key="1">
    <citation type="submission" date="2007-07" db="EMBL/GenBank/DDBJ databases">
        <title>Complete sequence of chromosome of Shewanella baltica OS185.</title>
        <authorList>
            <consortium name="US DOE Joint Genome Institute"/>
            <person name="Copeland A."/>
            <person name="Lucas S."/>
            <person name="Lapidus A."/>
            <person name="Barry K."/>
            <person name="Glavina del Rio T."/>
            <person name="Dalin E."/>
            <person name="Tice H."/>
            <person name="Pitluck S."/>
            <person name="Sims D."/>
            <person name="Brettin T."/>
            <person name="Bruce D."/>
            <person name="Detter J.C."/>
            <person name="Han C."/>
            <person name="Schmutz J."/>
            <person name="Larimer F."/>
            <person name="Land M."/>
            <person name="Hauser L."/>
            <person name="Kyrpides N."/>
            <person name="Mikhailova N."/>
            <person name="Brettar I."/>
            <person name="Rodrigues J."/>
            <person name="Konstantinidis K."/>
            <person name="Tiedje J."/>
            <person name="Richardson P."/>
        </authorList>
    </citation>
    <scope>NUCLEOTIDE SEQUENCE [LARGE SCALE GENOMIC DNA]</scope>
    <source>
        <strain>OS185</strain>
    </source>
</reference>
<organism>
    <name type="scientific">Shewanella baltica (strain OS185)</name>
    <dbReference type="NCBI Taxonomy" id="402882"/>
    <lineage>
        <taxon>Bacteria</taxon>
        <taxon>Pseudomonadati</taxon>
        <taxon>Pseudomonadota</taxon>
        <taxon>Gammaproteobacteria</taxon>
        <taxon>Alteromonadales</taxon>
        <taxon>Shewanellaceae</taxon>
        <taxon>Shewanella</taxon>
    </lineage>
</organism>
<dbReference type="EMBL" id="CP000753">
    <property type="protein sequence ID" value="ABS09407.1"/>
    <property type="molecule type" value="Genomic_DNA"/>
</dbReference>
<dbReference type="RefSeq" id="WP_006082716.1">
    <property type="nucleotide sequence ID" value="NC_009665.1"/>
</dbReference>
<dbReference type="SMR" id="A6WRG8"/>
<dbReference type="GeneID" id="11774928"/>
<dbReference type="KEGG" id="sbm:Shew185_3280"/>
<dbReference type="HOGENOM" id="CLU_006301_6_3_6"/>
<dbReference type="GO" id="GO:0005829">
    <property type="term" value="C:cytosol"/>
    <property type="evidence" value="ECO:0007669"/>
    <property type="project" value="TreeGrafter"/>
</dbReference>
<dbReference type="GO" id="GO:0005525">
    <property type="term" value="F:GTP binding"/>
    <property type="evidence" value="ECO:0007669"/>
    <property type="project" value="UniProtKB-KW"/>
</dbReference>
<dbReference type="GO" id="GO:0003924">
    <property type="term" value="F:GTPase activity"/>
    <property type="evidence" value="ECO:0007669"/>
    <property type="project" value="UniProtKB-UniRule"/>
</dbReference>
<dbReference type="GO" id="GO:0097216">
    <property type="term" value="F:guanosine tetraphosphate binding"/>
    <property type="evidence" value="ECO:0007669"/>
    <property type="project" value="UniProtKB-ARBA"/>
</dbReference>
<dbReference type="GO" id="GO:0003743">
    <property type="term" value="F:translation initiation factor activity"/>
    <property type="evidence" value="ECO:0007669"/>
    <property type="project" value="UniProtKB-UniRule"/>
</dbReference>
<dbReference type="CDD" id="cd01887">
    <property type="entry name" value="IF2_eIF5B"/>
    <property type="match status" value="1"/>
</dbReference>
<dbReference type="CDD" id="cd03702">
    <property type="entry name" value="IF2_mtIF2_II"/>
    <property type="match status" value="1"/>
</dbReference>
<dbReference type="CDD" id="cd03692">
    <property type="entry name" value="mtIF2_IVc"/>
    <property type="match status" value="1"/>
</dbReference>
<dbReference type="FunFam" id="2.40.30.10:FF:000007">
    <property type="entry name" value="Translation initiation factor IF-2"/>
    <property type="match status" value="1"/>
</dbReference>
<dbReference type="FunFam" id="2.40.30.10:FF:000008">
    <property type="entry name" value="Translation initiation factor IF-2"/>
    <property type="match status" value="1"/>
</dbReference>
<dbReference type="FunFam" id="3.40.50.10050:FF:000001">
    <property type="entry name" value="Translation initiation factor IF-2"/>
    <property type="match status" value="1"/>
</dbReference>
<dbReference type="FunFam" id="3.40.50.300:FF:000019">
    <property type="entry name" value="Translation initiation factor IF-2"/>
    <property type="match status" value="1"/>
</dbReference>
<dbReference type="Gene3D" id="3.40.50.300">
    <property type="entry name" value="P-loop containing nucleotide triphosphate hydrolases"/>
    <property type="match status" value="1"/>
</dbReference>
<dbReference type="Gene3D" id="3.30.56.50">
    <property type="entry name" value="Putative DNA-binding domain, N-terminal subdomain of bacterial translation initiation factor IF2"/>
    <property type="match status" value="1"/>
</dbReference>
<dbReference type="Gene3D" id="2.40.30.10">
    <property type="entry name" value="Translation factors"/>
    <property type="match status" value="2"/>
</dbReference>
<dbReference type="Gene3D" id="3.40.50.10050">
    <property type="entry name" value="Translation initiation factor IF- 2, domain 3"/>
    <property type="match status" value="1"/>
</dbReference>
<dbReference type="HAMAP" id="MF_00100_B">
    <property type="entry name" value="IF_2_B"/>
    <property type="match status" value="1"/>
</dbReference>
<dbReference type="InterPro" id="IPR009061">
    <property type="entry name" value="DNA-bd_dom_put_sf"/>
</dbReference>
<dbReference type="InterPro" id="IPR053905">
    <property type="entry name" value="EF-G-like_DII"/>
</dbReference>
<dbReference type="InterPro" id="IPR004161">
    <property type="entry name" value="EFTu-like_2"/>
</dbReference>
<dbReference type="InterPro" id="IPR013575">
    <property type="entry name" value="IF2_assoc_dom_bac"/>
</dbReference>
<dbReference type="InterPro" id="IPR044145">
    <property type="entry name" value="IF2_II"/>
</dbReference>
<dbReference type="InterPro" id="IPR006847">
    <property type="entry name" value="IF2_N"/>
</dbReference>
<dbReference type="InterPro" id="IPR027417">
    <property type="entry name" value="P-loop_NTPase"/>
</dbReference>
<dbReference type="InterPro" id="IPR005225">
    <property type="entry name" value="Small_GTP-bd"/>
</dbReference>
<dbReference type="InterPro" id="IPR000795">
    <property type="entry name" value="T_Tr_GTP-bd_dom"/>
</dbReference>
<dbReference type="InterPro" id="IPR000178">
    <property type="entry name" value="TF_IF2_bacterial-like"/>
</dbReference>
<dbReference type="InterPro" id="IPR015760">
    <property type="entry name" value="TIF_IF2"/>
</dbReference>
<dbReference type="InterPro" id="IPR023115">
    <property type="entry name" value="TIF_IF2_dom3"/>
</dbReference>
<dbReference type="InterPro" id="IPR036925">
    <property type="entry name" value="TIF_IF2_dom3_sf"/>
</dbReference>
<dbReference type="InterPro" id="IPR009000">
    <property type="entry name" value="Transl_B-barrel_sf"/>
</dbReference>
<dbReference type="NCBIfam" id="TIGR00487">
    <property type="entry name" value="IF-2"/>
    <property type="match status" value="1"/>
</dbReference>
<dbReference type="NCBIfam" id="TIGR00231">
    <property type="entry name" value="small_GTP"/>
    <property type="match status" value="1"/>
</dbReference>
<dbReference type="PANTHER" id="PTHR43381:SF5">
    <property type="entry name" value="TR-TYPE G DOMAIN-CONTAINING PROTEIN"/>
    <property type="match status" value="1"/>
</dbReference>
<dbReference type="PANTHER" id="PTHR43381">
    <property type="entry name" value="TRANSLATION INITIATION FACTOR IF-2-RELATED"/>
    <property type="match status" value="1"/>
</dbReference>
<dbReference type="Pfam" id="PF22042">
    <property type="entry name" value="EF-G_D2"/>
    <property type="match status" value="1"/>
</dbReference>
<dbReference type="Pfam" id="PF00009">
    <property type="entry name" value="GTP_EFTU"/>
    <property type="match status" value="1"/>
</dbReference>
<dbReference type="Pfam" id="PF03144">
    <property type="entry name" value="GTP_EFTU_D2"/>
    <property type="match status" value="1"/>
</dbReference>
<dbReference type="Pfam" id="PF11987">
    <property type="entry name" value="IF-2"/>
    <property type="match status" value="1"/>
</dbReference>
<dbReference type="Pfam" id="PF08364">
    <property type="entry name" value="IF2_assoc"/>
    <property type="match status" value="1"/>
</dbReference>
<dbReference type="Pfam" id="PF04760">
    <property type="entry name" value="IF2_N"/>
    <property type="match status" value="2"/>
</dbReference>
<dbReference type="SUPFAM" id="SSF52156">
    <property type="entry name" value="Initiation factor IF2/eIF5b, domain 3"/>
    <property type="match status" value="1"/>
</dbReference>
<dbReference type="SUPFAM" id="SSF52540">
    <property type="entry name" value="P-loop containing nucleoside triphosphate hydrolases"/>
    <property type="match status" value="1"/>
</dbReference>
<dbReference type="SUPFAM" id="SSF46955">
    <property type="entry name" value="Putative DNA-binding domain"/>
    <property type="match status" value="1"/>
</dbReference>
<dbReference type="SUPFAM" id="SSF50447">
    <property type="entry name" value="Translation proteins"/>
    <property type="match status" value="2"/>
</dbReference>
<dbReference type="PROSITE" id="PS51722">
    <property type="entry name" value="G_TR_2"/>
    <property type="match status" value="1"/>
</dbReference>
<dbReference type="PROSITE" id="PS01176">
    <property type="entry name" value="IF2"/>
    <property type="match status" value="1"/>
</dbReference>